<reference key="1">
    <citation type="journal article" date="2023" name="FEBS J.">
        <title>Pmu1a, a novel spider toxin with dual inhibitory activity at pain targets hNaV 1.7 and hCaV 3 voltage-gated channels.</title>
        <authorList>
            <person name="Giribaldi J."/>
            <person name="Chemin J."/>
            <person name="Tuifua M."/>
            <person name="Deuis J.R."/>
            <person name="Mary R."/>
            <person name="Vetter I."/>
            <person name="Wilson D.T."/>
            <person name="Daly N.L."/>
            <person name="Schroeder C.I."/>
            <person name="Bourinet E."/>
            <person name="Dutertre S."/>
        </authorList>
    </citation>
    <scope>PROTEIN SEQUENCE</scope>
    <scope>FUNCTION</scope>
    <scope>SYNTHESIS</scope>
    <scope>STRUCTURE BY NMR</scope>
    <scope>PROBABLE DISULFIDE BONDS</scope>
    <scope>SUBCELLULAR LOCATION</scope>
    <scope>MASS SPECTROMETRY</scope>
    <source>
        <tissue>Venom</tissue>
    </source>
</reference>
<accession>P0DQZ2</accession>
<feature type="peptide" id="PRO_0000458200" description="Mu/omega-theraphotoxin-Pmu1a" evidence="2">
    <location>
        <begin position="1"/>
        <end position="36"/>
    </location>
</feature>
<feature type="site" description="Important for interaction with Nav1.7/SCN9A" evidence="1">
    <location>
        <position position="4"/>
    </location>
</feature>
<feature type="site" description="Important for interaction with Nav1.7/SCN9A" evidence="1">
    <location>
        <position position="22"/>
    </location>
</feature>
<feature type="site" description="Important for interaction with Nav1.7/SCN9A" evidence="1">
    <location>
        <position position="24"/>
    </location>
</feature>
<feature type="site" description="Important for interaction with Nav1.7/SCN9A" evidence="1">
    <location>
        <position position="31"/>
    </location>
</feature>
<feature type="disulfide bond" evidence="5 6">
    <location>
        <begin position="2"/>
        <end position="16"/>
    </location>
</feature>
<feature type="disulfide bond" evidence="5 6">
    <location>
        <begin position="9"/>
        <end position="21"/>
    </location>
</feature>
<feature type="disulfide bond" evidence="5 6">
    <location>
        <begin position="15"/>
        <end position="29"/>
    </location>
</feature>
<feature type="turn" evidence="7">
    <location>
        <begin position="12"/>
        <end position="14"/>
    </location>
</feature>
<feature type="strand" evidence="7">
    <location>
        <begin position="17"/>
        <end position="21"/>
    </location>
</feature>
<feature type="strand" evidence="7">
    <location>
        <begin position="23"/>
        <end position="26"/>
    </location>
</feature>
<feature type="strand" evidence="7">
    <location>
        <begin position="29"/>
        <end position="31"/>
    </location>
</feature>
<dbReference type="PDB" id="8FEY">
    <property type="method" value="NMR"/>
    <property type="chains" value="A=1-36"/>
</dbReference>
<dbReference type="PDBsum" id="8FEY"/>
<dbReference type="SMR" id="P0DQZ2"/>
<dbReference type="GO" id="GO:0005576">
    <property type="term" value="C:extracellular region"/>
    <property type="evidence" value="ECO:0007669"/>
    <property type="project" value="UniProtKB-SubCell"/>
</dbReference>
<dbReference type="GO" id="GO:0005246">
    <property type="term" value="F:calcium channel regulator activity"/>
    <property type="evidence" value="ECO:0007669"/>
    <property type="project" value="UniProtKB-KW"/>
</dbReference>
<dbReference type="GO" id="GO:0008200">
    <property type="term" value="F:ion channel inhibitor activity"/>
    <property type="evidence" value="ECO:0007669"/>
    <property type="project" value="InterPro"/>
</dbReference>
<dbReference type="GO" id="GO:0017080">
    <property type="term" value="F:sodium channel regulator activity"/>
    <property type="evidence" value="ECO:0007669"/>
    <property type="project" value="UniProtKB-KW"/>
</dbReference>
<dbReference type="GO" id="GO:0090729">
    <property type="term" value="F:toxin activity"/>
    <property type="evidence" value="ECO:0007669"/>
    <property type="project" value="UniProtKB-KW"/>
</dbReference>
<dbReference type="InterPro" id="IPR011696">
    <property type="entry name" value="Huwentoxin-1"/>
</dbReference>
<dbReference type="Pfam" id="PF07740">
    <property type="entry name" value="Toxin_12"/>
    <property type="match status" value="1"/>
</dbReference>
<dbReference type="SUPFAM" id="SSF57059">
    <property type="entry name" value="omega toxin-like"/>
    <property type="match status" value="1"/>
</dbReference>
<evidence type="ECO:0000250" key="1">
    <source>
        <dbReference type="UniProtKB" id="P0DM12"/>
    </source>
</evidence>
<evidence type="ECO:0000269" key="2">
    <source>
    </source>
</evidence>
<evidence type="ECO:0000303" key="3">
    <source>
    </source>
</evidence>
<evidence type="ECO:0000305" key="4"/>
<evidence type="ECO:0000305" key="5">
    <source>
    </source>
</evidence>
<evidence type="ECO:0007744" key="6">
    <source>
        <dbReference type="PDB" id="8FEY"/>
    </source>
</evidence>
<evidence type="ECO:0007829" key="7">
    <source>
        <dbReference type="PDB" id="8FEY"/>
    </source>
</evidence>
<name>TXM1A_PTEMU</name>
<organism>
    <name type="scientific">Pterinochilus murinus</name>
    <name type="common">Mombasa golden starburst baboon spider</name>
    <dbReference type="NCBI Taxonomy" id="1184495"/>
    <lineage>
        <taxon>Eukaryota</taxon>
        <taxon>Metazoa</taxon>
        <taxon>Ecdysozoa</taxon>
        <taxon>Arthropoda</taxon>
        <taxon>Chelicerata</taxon>
        <taxon>Arachnida</taxon>
        <taxon>Araneae</taxon>
        <taxon>Mygalomorphae</taxon>
        <taxon>Theraphosidae</taxon>
        <taxon>Pterinochilus</taxon>
    </lineage>
</organism>
<sequence length="36" mass="4360">ECRWFWGGCNNDADCCKHLECKRKWPHICLWDGTFT</sequence>
<keyword id="KW-0002">3D-structure</keyword>
<keyword id="KW-0108">Calcium channel impairing toxin</keyword>
<keyword id="KW-0903">Direct protein sequencing</keyword>
<keyword id="KW-1015">Disulfide bond</keyword>
<keyword id="KW-0872">Ion channel impairing toxin</keyword>
<keyword id="KW-0960">Knottin</keyword>
<keyword id="KW-0528">Neurotoxin</keyword>
<keyword id="KW-0964">Secreted</keyword>
<keyword id="KW-0800">Toxin</keyword>
<keyword id="KW-1218">Voltage-gated calcium channel impairing toxin</keyword>
<keyword id="KW-0738">Voltage-gated sodium channel impairing toxin</keyword>
<protein>
    <recommendedName>
        <fullName evidence="3">Mu/omega-theraphotoxin-Pmu1a</fullName>
        <shortName evidence="3">Mu/omega-TRTX-Pmu1a</shortName>
    </recommendedName>
</protein>
<proteinExistence type="evidence at protein level"/>
<comment type="function">
    <text evidence="2">Gating-modifier toxin that targets both voltage-gated sodium and calcium channels, with described activities on human Nav1.7/SCN9A (IC(50)=5.5-7 nM), hNav1.6/SCN10A (IC(50)=9.9 nM), hNav1.4/SCN4A (IC(50)=62.9 nM), hCav3.2/CACNA1H (IC(50)=955.4 nM or 63.5% inhibition at 10 uM), hCav3.1/CACNA1G (95.1% inhibition at 10 uM), hCav3.3/CACNA1I (90.8% inhibition at 10 uM). Acts on Cav3 currents mainly by inducing a strong depolarizing shift in the current-voltage curve.</text>
</comment>
<comment type="subcellular location">
    <subcellularLocation>
        <location evidence="2">Secreted</location>
    </subcellularLocation>
</comment>
<comment type="tissue specificity">
    <text evidence="5">Expressed by the venom gland.</text>
</comment>
<comment type="domain">
    <text evidence="2">The presence of a 'disulfide through disulfide knot' structurally defines this protein as a knottin.</text>
</comment>
<comment type="mass spectrometry" mass="4350.83" method="Electrospray" evidence="2">
    <text>Monoisotopic mass.</text>
</comment>
<comment type="similarity">
    <text evidence="4">Belongs to the neurotoxin 10 (Hwtx-1) family.</text>
</comment>